<name>GRHL3_XENTR</name>
<protein>
    <recommendedName>
        <fullName>Grainyhead-like protein 3 homolog</fullName>
    </recommendedName>
    <alternativeName>
        <fullName>Transcription factor CP2-like 4</fullName>
    </alternativeName>
</protein>
<dbReference type="EMBL" id="CR848623">
    <property type="protein sequence ID" value="CAJ83942.1"/>
    <property type="molecule type" value="mRNA"/>
</dbReference>
<dbReference type="EMBL" id="BC074642">
    <property type="protein sequence ID" value="AAH74642.1"/>
    <property type="molecule type" value="mRNA"/>
</dbReference>
<dbReference type="RefSeq" id="NP_001005642.1">
    <property type="nucleotide sequence ID" value="NM_001005642.1"/>
</dbReference>
<dbReference type="SMR" id="Q6GL65"/>
<dbReference type="FunCoup" id="Q6GL65">
    <property type="interactions" value="1260"/>
</dbReference>
<dbReference type="STRING" id="8364.ENSXETP00000029706"/>
<dbReference type="PaxDb" id="8364-ENSXETP00000060412"/>
<dbReference type="DNASU" id="448111"/>
<dbReference type="GeneID" id="448111"/>
<dbReference type="KEGG" id="xtr:448111"/>
<dbReference type="AGR" id="Xenbase:XB-GENE-919797"/>
<dbReference type="CTD" id="57822"/>
<dbReference type="Xenbase" id="XB-GENE-919797">
    <property type="gene designation" value="grhl3"/>
</dbReference>
<dbReference type="eggNOG" id="KOG4091">
    <property type="taxonomic scope" value="Eukaryota"/>
</dbReference>
<dbReference type="HOGENOM" id="CLU_021156_1_1_1"/>
<dbReference type="InParanoid" id="Q6GL65"/>
<dbReference type="OMA" id="MDSWSYL"/>
<dbReference type="OrthoDB" id="7680836at2759"/>
<dbReference type="PhylomeDB" id="Q6GL65"/>
<dbReference type="Proteomes" id="UP000008143">
    <property type="component" value="Chromosome 2"/>
</dbReference>
<dbReference type="Bgee" id="ENSXETG00000003899">
    <property type="expression patterns" value="Expressed in embryo and 6 other cell types or tissues"/>
</dbReference>
<dbReference type="GO" id="GO:0005634">
    <property type="term" value="C:nucleus"/>
    <property type="evidence" value="ECO:0007669"/>
    <property type="project" value="UniProtKB-SubCell"/>
</dbReference>
<dbReference type="GO" id="GO:0003677">
    <property type="term" value="F:DNA binding"/>
    <property type="evidence" value="ECO:0007669"/>
    <property type="project" value="UniProtKB-KW"/>
</dbReference>
<dbReference type="GO" id="GO:0003700">
    <property type="term" value="F:DNA-binding transcription factor activity"/>
    <property type="evidence" value="ECO:0007669"/>
    <property type="project" value="InterPro"/>
</dbReference>
<dbReference type="GO" id="GO:0006357">
    <property type="term" value="P:regulation of transcription by RNA polymerase II"/>
    <property type="evidence" value="ECO:0007669"/>
    <property type="project" value="InterPro"/>
</dbReference>
<dbReference type="InterPro" id="IPR007604">
    <property type="entry name" value="CP2"/>
</dbReference>
<dbReference type="InterPro" id="IPR040167">
    <property type="entry name" value="TF_CP2-like"/>
</dbReference>
<dbReference type="PANTHER" id="PTHR11037:SF6">
    <property type="entry name" value="GRAINYHEAD-LIKE PROTEIN 3 HOMOLOG"/>
    <property type="match status" value="1"/>
</dbReference>
<dbReference type="PANTHER" id="PTHR11037">
    <property type="entry name" value="TRANSCRIPTION FACTOR CP2"/>
    <property type="match status" value="1"/>
</dbReference>
<dbReference type="Pfam" id="PF04516">
    <property type="entry name" value="CP2"/>
    <property type="match status" value="1"/>
</dbReference>
<dbReference type="Pfam" id="PF25416">
    <property type="entry name" value="GRHL1_C"/>
    <property type="match status" value="1"/>
</dbReference>
<dbReference type="PROSITE" id="PS51968">
    <property type="entry name" value="GRH_CP2_DB"/>
    <property type="match status" value="1"/>
</dbReference>
<feature type="chain" id="PRO_0000228000" description="Grainyhead-like protein 3 homolog">
    <location>
        <begin position="1"/>
        <end position="594"/>
    </location>
</feature>
<feature type="domain" description="Grh/CP2 DB" evidence="4">
    <location>
        <begin position="220"/>
        <end position="453"/>
    </location>
</feature>
<feature type="region of interest" description="Transcription activation">
    <location>
        <begin position="25"/>
        <end position="75"/>
    </location>
</feature>
<feature type="region of interest" description="Transcription activation" evidence="3">
    <location>
        <begin position="28"/>
        <end position="91"/>
    </location>
</feature>
<feature type="region of interest" description="Disordered" evidence="5">
    <location>
        <begin position="483"/>
        <end position="503"/>
    </location>
</feature>
<accession>Q6GL65</accession>
<accession>Q28DS4</accession>
<gene>
    <name type="primary">grhl3</name>
    <name type="synonym">tfcp2l4</name>
    <name type="ORF">TGas117i15.1</name>
</gene>
<proteinExistence type="evidence at transcript level"/>
<comment type="function">
    <text evidence="1 3">Transcription factor playing important roles in primary neurulation and in the differentiation of stratified epithelia of both ectodermal and endodermal origin. Binds directly to the consensus DNA sequence 5'-AACCGGTT-3' acting as an activator and repressor on distinct target genes.</text>
</comment>
<comment type="subcellular location">
    <subcellularLocation>
        <location evidence="2 3">Nucleus</location>
    </subcellularLocation>
</comment>
<comment type="miscellaneous">
    <text evidence="1">GRHL genes (GRHL1, GRHL2 and GRHL3) show a paradoxal lack of redundancy despite their extensive sequence identity in the DNA-binding and protein dimerization domains and the fact that the core consensus DNA binding sites are identical. They have related but remarkably different functions during embryogenesis because of their differential spatiotemporal expression patterns during development.</text>
</comment>
<comment type="similarity">
    <text evidence="6">Belongs to the grh/CP2 family. Grainyhead subfamily.</text>
</comment>
<organism>
    <name type="scientific">Xenopus tropicalis</name>
    <name type="common">Western clawed frog</name>
    <name type="synonym">Silurana tropicalis</name>
    <dbReference type="NCBI Taxonomy" id="8364"/>
    <lineage>
        <taxon>Eukaryota</taxon>
        <taxon>Metazoa</taxon>
        <taxon>Chordata</taxon>
        <taxon>Craniata</taxon>
        <taxon>Vertebrata</taxon>
        <taxon>Euteleostomi</taxon>
        <taxon>Amphibia</taxon>
        <taxon>Batrachia</taxon>
        <taxon>Anura</taxon>
        <taxon>Pipoidea</taxon>
        <taxon>Pipidae</taxon>
        <taxon>Xenopodinae</taxon>
        <taxon>Xenopus</taxon>
        <taxon>Silurana</taxon>
    </lineage>
</organism>
<reference key="1">
    <citation type="submission" date="2006-03" db="EMBL/GenBank/DDBJ databases">
        <authorList>
            <consortium name="Sanger Xenopus tropicalis EST/cDNA project"/>
        </authorList>
    </citation>
    <scope>NUCLEOTIDE SEQUENCE [LARGE SCALE MRNA]</scope>
    <source>
        <tissue>Gastrula</tissue>
    </source>
</reference>
<reference key="2">
    <citation type="submission" date="2004-06" db="EMBL/GenBank/DDBJ databases">
        <authorList>
            <consortium name="NIH - Xenopus Gene Collection (XGC) project"/>
        </authorList>
    </citation>
    <scope>NUCLEOTIDE SEQUENCE [LARGE SCALE MRNA]</scope>
    <source>
        <tissue>Embryo</tissue>
    </source>
</reference>
<sequence>MSNELDYRPVMLLQNDINLKYSSPNDDEAWSKYLENPMTAATKAMMRANGDDDGVAALSLLYDYYRVPKEKRIITQGSTGRCDQVKRSCIEYDSDISTYDSTQLMRFLNDNNSSTHEYSETHKKNSYLSLDCLINPSKLPLSSGKLDNNAHDDFMATSCDVYEKNPLTTLFDPIHVPPPQQRWQPDSTFKEDTPEPLIFNDILRSQAESTCSEDYIPGEANRDFECTLESPKAIHIKSGESPMAYLNKGQFYPVNLRTAETRKCVHLTSNKVKSVVMVVFDNEKNPEEQLKRWKHWHSRQPTAKQRVIDVADYKENCNTVENIEEVAYNALSFVWNINEEAKIFIGINCLSTDFSSQKGVKGVPLNLQIDTYDFETGVKRLIHRAVCQIKIFCDKGAERKMRDEERKQFRRKGKSADQNNKDIKASVLPGYRGSDFTYLRPVTDMETHPVLFIPNIHYSNLQRCGVVLQSAADNSDRLSLKRSSQSFPESFEAPPSKQQTNEDPQRVLLYVRRETEEVFDALMLKTPDLKGLRNAISEKYELPEERICRVYKKCKRGILVNMDNNIIQHYSNHVAFLLDLTDVDGKIQVTLKEL</sequence>
<evidence type="ECO:0000250" key="1">
    <source>
        <dbReference type="UniProtKB" id="Q5FWH3"/>
    </source>
</evidence>
<evidence type="ECO:0000250" key="2">
    <source>
        <dbReference type="UniProtKB" id="Q6ISB3"/>
    </source>
</evidence>
<evidence type="ECO:0000250" key="3">
    <source>
        <dbReference type="UniProtKB" id="Q8TE85"/>
    </source>
</evidence>
<evidence type="ECO:0000255" key="4">
    <source>
        <dbReference type="PROSITE-ProRule" id="PRU01313"/>
    </source>
</evidence>
<evidence type="ECO:0000256" key="5">
    <source>
        <dbReference type="SAM" id="MobiDB-lite"/>
    </source>
</evidence>
<evidence type="ECO:0000305" key="6"/>
<keyword id="KW-0238">DNA-binding</keyword>
<keyword id="KW-0539">Nucleus</keyword>
<keyword id="KW-1185">Reference proteome</keyword>
<keyword id="KW-0804">Transcription</keyword>
<keyword id="KW-0805">Transcription regulation</keyword>